<keyword id="KW-0004">4Fe-4S</keyword>
<keyword id="KW-0408">Iron</keyword>
<keyword id="KW-0411">Iron-sulfur</keyword>
<keyword id="KW-0479">Metal-binding</keyword>
<keyword id="KW-0489">Methyltransferase</keyword>
<keyword id="KW-0949">S-adenosyl-L-methionine</keyword>
<keyword id="KW-0808">Transferase</keyword>
<evidence type="ECO:0000250" key="1"/>
<evidence type="ECO:0000255" key="2">
    <source>
        <dbReference type="PROSITE-ProRule" id="PRU01024"/>
    </source>
</evidence>
<evidence type="ECO:0000305" key="3"/>
<proteinExistence type="inferred from homology"/>
<name>Y118_CHLMU</name>
<accession>P58106</accession>
<protein>
    <recommendedName>
        <fullName>Uncharacterized RNA methyltransferase TC_0118</fullName>
        <ecNumber>2.1.1.-</ecNumber>
    </recommendedName>
</protein>
<reference key="1">
    <citation type="journal article" date="2000" name="Nucleic Acids Res.">
        <title>Genome sequences of Chlamydia trachomatis MoPn and Chlamydia pneumoniae AR39.</title>
        <authorList>
            <person name="Read T.D."/>
            <person name="Brunham R.C."/>
            <person name="Shen C."/>
            <person name="Gill S.R."/>
            <person name="Heidelberg J.F."/>
            <person name="White O."/>
            <person name="Hickey E.K."/>
            <person name="Peterson J.D."/>
            <person name="Utterback T.R."/>
            <person name="Berry K.J."/>
            <person name="Bass S."/>
            <person name="Linher K.D."/>
            <person name="Weidman J.F."/>
            <person name="Khouri H.M."/>
            <person name="Craven B."/>
            <person name="Bowman C."/>
            <person name="Dodson R.J."/>
            <person name="Gwinn M.L."/>
            <person name="Nelson W.C."/>
            <person name="DeBoy R.T."/>
            <person name="Kolonay J.F."/>
            <person name="McClarty G."/>
            <person name="Salzberg S.L."/>
            <person name="Eisen J.A."/>
            <person name="Fraser C.M."/>
        </authorList>
    </citation>
    <scope>NUCLEOTIDE SEQUENCE [LARGE SCALE GENOMIC DNA]</scope>
    <source>
        <strain>MoPn / Nigg</strain>
    </source>
</reference>
<gene>
    <name type="ordered locus">TC_0118</name>
</gene>
<dbReference type="EC" id="2.1.1.-"/>
<dbReference type="EMBL" id="AE002160">
    <property type="status" value="NOT_ANNOTATED_CDS"/>
    <property type="molecule type" value="Genomic_DNA"/>
</dbReference>
<dbReference type="SMR" id="P58106"/>
<dbReference type="OrthoDB" id="9804590at2"/>
<dbReference type="Proteomes" id="UP000000800">
    <property type="component" value="Chromosome"/>
</dbReference>
<dbReference type="GO" id="GO:0051539">
    <property type="term" value="F:4 iron, 4 sulfur cluster binding"/>
    <property type="evidence" value="ECO:0007669"/>
    <property type="project" value="UniProtKB-KW"/>
</dbReference>
<dbReference type="GO" id="GO:0046872">
    <property type="term" value="F:metal ion binding"/>
    <property type="evidence" value="ECO:0007669"/>
    <property type="project" value="UniProtKB-KW"/>
</dbReference>
<dbReference type="GO" id="GO:0070041">
    <property type="term" value="F:rRNA (uridine-C5-)-methyltransferase activity"/>
    <property type="evidence" value="ECO:0007669"/>
    <property type="project" value="TreeGrafter"/>
</dbReference>
<dbReference type="GO" id="GO:0070475">
    <property type="term" value="P:rRNA base methylation"/>
    <property type="evidence" value="ECO:0007669"/>
    <property type="project" value="TreeGrafter"/>
</dbReference>
<dbReference type="CDD" id="cd02440">
    <property type="entry name" value="AdoMet_MTases"/>
    <property type="match status" value="1"/>
</dbReference>
<dbReference type="Gene3D" id="2.40.50.1070">
    <property type="match status" value="1"/>
</dbReference>
<dbReference type="Gene3D" id="3.40.50.150">
    <property type="entry name" value="Vaccinia Virus protein VP39"/>
    <property type="match status" value="1"/>
</dbReference>
<dbReference type="InterPro" id="IPR030390">
    <property type="entry name" value="MeTrfase_TrmA_AS"/>
</dbReference>
<dbReference type="InterPro" id="IPR030391">
    <property type="entry name" value="MeTrfase_TrmA_CS"/>
</dbReference>
<dbReference type="InterPro" id="IPR029063">
    <property type="entry name" value="SAM-dependent_MTases_sf"/>
</dbReference>
<dbReference type="InterPro" id="IPR010280">
    <property type="entry name" value="U5_MeTrfase_fam"/>
</dbReference>
<dbReference type="NCBIfam" id="TIGR00479">
    <property type="entry name" value="rumA"/>
    <property type="match status" value="1"/>
</dbReference>
<dbReference type="PANTHER" id="PTHR11061">
    <property type="entry name" value="RNA M5U METHYLTRANSFERASE"/>
    <property type="match status" value="1"/>
</dbReference>
<dbReference type="PANTHER" id="PTHR11061:SF30">
    <property type="entry name" value="TRNA (URACIL(54)-C(5))-METHYLTRANSFERASE"/>
    <property type="match status" value="1"/>
</dbReference>
<dbReference type="Pfam" id="PF05958">
    <property type="entry name" value="tRNA_U5-meth_tr"/>
    <property type="match status" value="1"/>
</dbReference>
<dbReference type="SUPFAM" id="SSF53335">
    <property type="entry name" value="S-adenosyl-L-methionine-dependent methyltransferases"/>
    <property type="match status" value="1"/>
</dbReference>
<dbReference type="PROSITE" id="PS51687">
    <property type="entry name" value="SAM_MT_RNA_M5U"/>
    <property type="match status" value="1"/>
</dbReference>
<dbReference type="PROSITE" id="PS01230">
    <property type="entry name" value="TRMA_1"/>
    <property type="match status" value="1"/>
</dbReference>
<dbReference type="PROSITE" id="PS01231">
    <property type="entry name" value="TRMA_2"/>
    <property type="match status" value="1"/>
</dbReference>
<comment type="similarity">
    <text evidence="2">Belongs to the class I-like SAM-binding methyltransferase superfamily. RNA M5U methyltransferase family.</text>
</comment>
<comment type="sequence caution" evidence="3">
    <conflict type="frameshift">
        <sequence resource="EMBL" id="AE002160"/>
    </conflict>
</comment>
<organism>
    <name type="scientific">Chlamydia muridarum (strain MoPn / Nigg)</name>
    <dbReference type="NCBI Taxonomy" id="243161"/>
    <lineage>
        <taxon>Bacteria</taxon>
        <taxon>Pseudomonadati</taxon>
        <taxon>Chlamydiota</taxon>
        <taxon>Chlamydiia</taxon>
        <taxon>Chlamydiales</taxon>
        <taxon>Chlamydiaceae</taxon>
        <taxon>Chlamydia/Chlamydophila group</taxon>
        <taxon>Chlamydia</taxon>
    </lineage>
</organism>
<feature type="chain" id="PRO_0000161964" description="Uncharacterized RNA methyltransferase TC_0118">
    <location>
        <begin position="1"/>
        <end position="397"/>
    </location>
</feature>
<feature type="active site" description="Nucleophile" evidence="2">
    <location>
        <position position="352"/>
    </location>
</feature>
<feature type="binding site" evidence="1">
    <location>
        <position position="8"/>
    </location>
    <ligand>
        <name>[4Fe-4S] cluster</name>
        <dbReference type="ChEBI" id="CHEBI:49883"/>
    </ligand>
</feature>
<feature type="binding site" evidence="1">
    <location>
        <position position="14"/>
    </location>
    <ligand>
        <name>[4Fe-4S] cluster</name>
        <dbReference type="ChEBI" id="CHEBI:49883"/>
    </ligand>
</feature>
<feature type="binding site" evidence="1">
    <location>
        <position position="17"/>
    </location>
    <ligand>
        <name>[4Fe-4S] cluster</name>
        <dbReference type="ChEBI" id="CHEBI:49883"/>
    </ligand>
</feature>
<feature type="binding site" evidence="1">
    <location>
        <position position="95"/>
    </location>
    <ligand>
        <name>[4Fe-4S] cluster</name>
        <dbReference type="ChEBI" id="CHEBI:49883"/>
    </ligand>
</feature>
<feature type="binding site" evidence="2">
    <location>
        <position position="229"/>
    </location>
    <ligand>
        <name>S-adenosyl-L-methionine</name>
        <dbReference type="ChEBI" id="CHEBI:59789"/>
    </ligand>
</feature>
<feature type="binding site" evidence="2">
    <location>
        <position position="258"/>
    </location>
    <ligand>
        <name>S-adenosyl-L-methionine</name>
        <dbReference type="ChEBI" id="CHEBI:59789"/>
    </ligand>
</feature>
<feature type="binding site" evidence="2">
    <location>
        <position position="279"/>
    </location>
    <ligand>
        <name>S-adenosyl-L-methionine</name>
        <dbReference type="ChEBI" id="CHEBI:59789"/>
    </ligand>
</feature>
<feature type="binding site" evidence="2">
    <location>
        <position position="325"/>
    </location>
    <ligand>
        <name>S-adenosyl-L-methionine</name>
        <dbReference type="ChEBI" id="CHEBI:59789"/>
    </ligand>
</feature>
<sequence>MLACHHNCKHFGICGGCSSPQTEYELSLKAKELALHNLFSPLIPSQKILPVIPCSPILRGRNKMEFSFYQTVDGEKTLGFISPSKPKKGIPITECLMIDERAIDILNYTRSWWATHPELSAYYPPLNKGSLCTLTVRIGNVSNDFMIILTTSGREEFAVPLSVIQEWQKTLLDSGLPITSIFWEEKLSARNSPTTFRTTHLYGEQFLKQQLSIEGRSNIFHVRPRSFFQPQSRQAEKIIQTIKDFISPTGEETLLDLYCGAGTIGISLSPYVKKIIGVELVPDAVASAQENIQLNSANMEVFLEDAKQFCRRHEHLPPLDIVVIDPPRCGMQNKALKYLLRMSPKKIIYVSCNPLTQISECSILVEHGYQLQRMQPIDQFPHTHHLENVVLLERLSF</sequence>